<proteinExistence type="inferred from homology"/>
<reference key="1">
    <citation type="journal article" date="1999" name="Genetics">
        <title>Divergence of the hyperthermophilic archaea Pyrococcus furiosus and P. horikoshii inferred from complete genomic sequences.</title>
        <authorList>
            <person name="Maeder D.L."/>
            <person name="Weiss R.B."/>
            <person name="Dunn D.M."/>
            <person name="Cherry J.L."/>
            <person name="Gonzalez J.M."/>
            <person name="DiRuggiero J."/>
            <person name="Robb F.T."/>
        </authorList>
    </citation>
    <scope>NUCLEOTIDE SEQUENCE [LARGE SCALE GENOMIC DNA]</scope>
    <source>
        <strain>ATCC 43587 / DSM 3638 / JCM 8422 / Vc1</strain>
    </source>
</reference>
<feature type="chain" id="PRO_0000144173" description="Putative transcriptional regulatory protein PF0535">
    <location>
        <begin position="1"/>
        <end position="142"/>
    </location>
</feature>
<gene>
    <name type="ordered locus">PF0535</name>
</gene>
<organism>
    <name type="scientific">Pyrococcus furiosus (strain ATCC 43587 / DSM 3638 / JCM 8422 / Vc1)</name>
    <dbReference type="NCBI Taxonomy" id="186497"/>
    <lineage>
        <taxon>Archaea</taxon>
        <taxon>Methanobacteriati</taxon>
        <taxon>Methanobacteriota</taxon>
        <taxon>Thermococci</taxon>
        <taxon>Thermococcales</taxon>
        <taxon>Thermococcaceae</taxon>
        <taxon>Pyrococcus</taxon>
    </lineage>
</organism>
<sequence>MKTFLTEQQIKVLMLRAKGYKQSEIAKILGTSRANVSILEKRAMEKIEKARNTLLLWEQINSKVIVEIKAGEDIFSIPEKFFKKADKVGVKVPYSTAEIITFLVEHAPVEDRLAKRDFVLFLDSKNKLRIGDCLVIEEIKED</sequence>
<dbReference type="EMBL" id="AE009950">
    <property type="protein sequence ID" value="AAL80659.1"/>
    <property type="molecule type" value="Genomic_DNA"/>
</dbReference>
<dbReference type="RefSeq" id="WP_011011652.1">
    <property type="nucleotide sequence ID" value="NZ_CP023154.1"/>
</dbReference>
<dbReference type="SMR" id="Q8U3D3"/>
<dbReference type="STRING" id="186497.PF0535"/>
<dbReference type="PaxDb" id="186497-PF0535"/>
<dbReference type="KEGG" id="pfu:PF0535"/>
<dbReference type="PATRIC" id="fig|186497.12.peg.559"/>
<dbReference type="eggNOG" id="arCOG04554">
    <property type="taxonomic scope" value="Archaea"/>
</dbReference>
<dbReference type="HOGENOM" id="CLU_125807_0_1_2"/>
<dbReference type="OrthoDB" id="17771at2157"/>
<dbReference type="PhylomeDB" id="Q8U3D3"/>
<dbReference type="Proteomes" id="UP000001013">
    <property type="component" value="Chromosome"/>
</dbReference>
<dbReference type="GO" id="GO:0003677">
    <property type="term" value="F:DNA binding"/>
    <property type="evidence" value="ECO:0007669"/>
    <property type="project" value="UniProtKB-KW"/>
</dbReference>
<dbReference type="GO" id="GO:0003700">
    <property type="term" value="F:DNA-binding transcription factor activity"/>
    <property type="evidence" value="ECO:0007669"/>
    <property type="project" value="UniProtKB-UniRule"/>
</dbReference>
<dbReference type="GO" id="GO:0006352">
    <property type="term" value="P:DNA-templated transcription initiation"/>
    <property type="evidence" value="ECO:0007669"/>
    <property type="project" value="InterPro"/>
</dbReference>
<dbReference type="Gene3D" id="3.30.1190.10">
    <property type="entry name" value="DNA-binding protein Tfx superfamily, archaea"/>
    <property type="match status" value="1"/>
</dbReference>
<dbReference type="HAMAP" id="MF_00620">
    <property type="entry name" value="HTH_type_Tfx"/>
    <property type="match status" value="1"/>
</dbReference>
<dbReference type="InterPro" id="IPR007630">
    <property type="entry name" value="RNA_pol_sigma70_r4"/>
</dbReference>
<dbReference type="InterPro" id="IPR029291">
    <property type="entry name" value="Tfx_C"/>
</dbReference>
<dbReference type="InterPro" id="IPR004645">
    <property type="entry name" value="Tfx_DNA-bd_arc"/>
</dbReference>
<dbReference type="InterPro" id="IPR018384">
    <property type="entry name" value="Tfx_DNA-bd_euryarc"/>
</dbReference>
<dbReference type="InterPro" id="IPR036657">
    <property type="entry name" value="Tfx_DNA-bd_sf_arc"/>
</dbReference>
<dbReference type="NCBIfam" id="NF003055">
    <property type="entry name" value="PRK03975.1-2"/>
    <property type="match status" value="1"/>
</dbReference>
<dbReference type="NCBIfam" id="NF003056">
    <property type="entry name" value="PRK03975.1-4"/>
    <property type="match status" value="1"/>
</dbReference>
<dbReference type="NCBIfam" id="TIGR00721">
    <property type="entry name" value="tfx"/>
    <property type="match status" value="1"/>
</dbReference>
<dbReference type="Pfam" id="PF04545">
    <property type="entry name" value="Sigma70_r4"/>
    <property type="match status" value="1"/>
</dbReference>
<dbReference type="Pfam" id="PF14601">
    <property type="entry name" value="TFX_C"/>
    <property type="match status" value="1"/>
</dbReference>
<dbReference type="PIRSF" id="PIRSF004932">
    <property type="entry name" value="DNA_bind_Tfx"/>
    <property type="match status" value="1"/>
</dbReference>
<dbReference type="SUPFAM" id="SSF89915">
    <property type="entry name" value="DNA-binding protein Tfx"/>
    <property type="match status" value="1"/>
</dbReference>
<keyword id="KW-0238">DNA-binding</keyword>
<keyword id="KW-1185">Reference proteome</keyword>
<keyword id="KW-0804">Transcription</keyword>
<keyword id="KW-0805">Transcription regulation</keyword>
<name>Y535_PYRFU</name>
<accession>Q8U3D3</accession>
<protein>
    <recommendedName>
        <fullName evidence="1">Putative transcriptional regulatory protein PF0535</fullName>
    </recommendedName>
</protein>
<comment type="function">
    <text evidence="1">Putative transcriptional regulator.</text>
</comment>
<comment type="similarity">
    <text evidence="1">Belongs to the Tfx family.</text>
</comment>
<evidence type="ECO:0000255" key="1">
    <source>
        <dbReference type="HAMAP-Rule" id="MF_00620"/>
    </source>
</evidence>